<feature type="chain" id="PRO_1000065921" description="Orotidine 5'-phosphate decarboxylase">
    <location>
        <begin position="1"/>
        <end position="231"/>
    </location>
</feature>
<feature type="active site" description="Proton donor" evidence="1">
    <location>
        <position position="62"/>
    </location>
</feature>
<feature type="binding site" evidence="1">
    <location>
        <position position="11"/>
    </location>
    <ligand>
        <name>substrate</name>
    </ligand>
</feature>
<feature type="binding site" evidence="1">
    <location>
        <position position="33"/>
    </location>
    <ligand>
        <name>substrate</name>
    </ligand>
</feature>
<feature type="binding site" evidence="1">
    <location>
        <begin position="60"/>
        <end position="69"/>
    </location>
    <ligand>
        <name>substrate</name>
    </ligand>
</feature>
<feature type="binding site" evidence="1">
    <location>
        <position position="117"/>
    </location>
    <ligand>
        <name>substrate</name>
    </ligand>
</feature>
<feature type="binding site" evidence="1">
    <location>
        <position position="178"/>
    </location>
    <ligand>
        <name>substrate</name>
    </ligand>
</feature>
<feature type="binding site" evidence="1">
    <location>
        <position position="187"/>
    </location>
    <ligand>
        <name>substrate</name>
    </ligand>
</feature>
<feature type="binding site" evidence="1">
    <location>
        <position position="207"/>
    </location>
    <ligand>
        <name>substrate</name>
    </ligand>
</feature>
<feature type="binding site" evidence="1">
    <location>
        <position position="208"/>
    </location>
    <ligand>
        <name>substrate</name>
    </ligand>
</feature>
<organism>
    <name type="scientific">Nitrosomonas eutropha (strain DSM 101675 / C91 / Nm57)</name>
    <dbReference type="NCBI Taxonomy" id="335283"/>
    <lineage>
        <taxon>Bacteria</taxon>
        <taxon>Pseudomonadati</taxon>
        <taxon>Pseudomonadota</taxon>
        <taxon>Betaproteobacteria</taxon>
        <taxon>Nitrosomonadales</taxon>
        <taxon>Nitrosomonadaceae</taxon>
        <taxon>Nitrosomonas</taxon>
    </lineage>
</organism>
<proteinExistence type="inferred from homology"/>
<name>PYRF_NITEC</name>
<sequence length="231" mass="24986">MNDSRIIVALDFSDQGTALNFAATLDSRLCRIKVGKELFTLAGPQLIEKLMRLGFDVFLDLKFHDIPNTVAAACSVASSLGVWMINVHALGGSKMLLAARQALDGKRTRLIAVTLLTSMNHDDLSELGISGSPEIIVQRLALLAQRCGLDGVVCSALEAASLREKAGKDFWLITPGIRSSNDNRDDQARIATPTMAIRNGASYLVIGRPITRSPDPLKALQRFNDEIVSAL</sequence>
<gene>
    <name evidence="1" type="primary">pyrF</name>
    <name type="ordered locus">Neut_0402</name>
</gene>
<comment type="function">
    <text evidence="1">Catalyzes the decarboxylation of orotidine 5'-monophosphate (OMP) to uridine 5'-monophosphate (UMP).</text>
</comment>
<comment type="catalytic activity">
    <reaction evidence="1">
        <text>orotidine 5'-phosphate + H(+) = UMP + CO2</text>
        <dbReference type="Rhea" id="RHEA:11596"/>
        <dbReference type="ChEBI" id="CHEBI:15378"/>
        <dbReference type="ChEBI" id="CHEBI:16526"/>
        <dbReference type="ChEBI" id="CHEBI:57538"/>
        <dbReference type="ChEBI" id="CHEBI:57865"/>
        <dbReference type="EC" id="4.1.1.23"/>
    </reaction>
</comment>
<comment type="pathway">
    <text evidence="1">Pyrimidine metabolism; UMP biosynthesis via de novo pathway; UMP from orotate: step 2/2.</text>
</comment>
<comment type="subunit">
    <text evidence="1">Homodimer.</text>
</comment>
<comment type="similarity">
    <text evidence="1">Belongs to the OMP decarboxylase family. Type 1 subfamily.</text>
</comment>
<protein>
    <recommendedName>
        <fullName evidence="1">Orotidine 5'-phosphate decarboxylase</fullName>
        <ecNumber evidence="1">4.1.1.23</ecNumber>
    </recommendedName>
    <alternativeName>
        <fullName evidence="1">OMP decarboxylase</fullName>
        <shortName evidence="1">OMPDCase</shortName>
        <shortName evidence="1">OMPdecase</shortName>
    </alternativeName>
</protein>
<accession>Q0AIZ1</accession>
<dbReference type="EC" id="4.1.1.23" evidence="1"/>
<dbReference type="EMBL" id="CP000450">
    <property type="protein sequence ID" value="ABI58680.1"/>
    <property type="molecule type" value="Genomic_DNA"/>
</dbReference>
<dbReference type="RefSeq" id="WP_011633522.1">
    <property type="nucleotide sequence ID" value="NC_008344.1"/>
</dbReference>
<dbReference type="SMR" id="Q0AIZ1"/>
<dbReference type="STRING" id="335283.Neut_0402"/>
<dbReference type="KEGG" id="net:Neut_0402"/>
<dbReference type="eggNOG" id="COG0284">
    <property type="taxonomic scope" value="Bacteria"/>
</dbReference>
<dbReference type="HOGENOM" id="CLU_067069_0_0_4"/>
<dbReference type="OrthoDB" id="9806203at2"/>
<dbReference type="UniPathway" id="UPA00070">
    <property type="reaction ID" value="UER00120"/>
</dbReference>
<dbReference type="Proteomes" id="UP000001966">
    <property type="component" value="Chromosome"/>
</dbReference>
<dbReference type="GO" id="GO:0005829">
    <property type="term" value="C:cytosol"/>
    <property type="evidence" value="ECO:0007669"/>
    <property type="project" value="TreeGrafter"/>
</dbReference>
<dbReference type="GO" id="GO:0004590">
    <property type="term" value="F:orotidine-5'-phosphate decarboxylase activity"/>
    <property type="evidence" value="ECO:0007669"/>
    <property type="project" value="UniProtKB-UniRule"/>
</dbReference>
<dbReference type="GO" id="GO:0006207">
    <property type="term" value="P:'de novo' pyrimidine nucleobase biosynthetic process"/>
    <property type="evidence" value="ECO:0007669"/>
    <property type="project" value="InterPro"/>
</dbReference>
<dbReference type="GO" id="GO:0044205">
    <property type="term" value="P:'de novo' UMP biosynthetic process"/>
    <property type="evidence" value="ECO:0007669"/>
    <property type="project" value="UniProtKB-UniRule"/>
</dbReference>
<dbReference type="CDD" id="cd04725">
    <property type="entry name" value="OMP_decarboxylase_like"/>
    <property type="match status" value="1"/>
</dbReference>
<dbReference type="FunFam" id="3.20.20.70:FF:000015">
    <property type="entry name" value="Orotidine 5'-phosphate decarboxylase"/>
    <property type="match status" value="1"/>
</dbReference>
<dbReference type="Gene3D" id="3.20.20.70">
    <property type="entry name" value="Aldolase class I"/>
    <property type="match status" value="1"/>
</dbReference>
<dbReference type="HAMAP" id="MF_01200_B">
    <property type="entry name" value="OMPdecase_type1_B"/>
    <property type="match status" value="1"/>
</dbReference>
<dbReference type="InterPro" id="IPR013785">
    <property type="entry name" value="Aldolase_TIM"/>
</dbReference>
<dbReference type="InterPro" id="IPR014732">
    <property type="entry name" value="OMPdecase"/>
</dbReference>
<dbReference type="InterPro" id="IPR018089">
    <property type="entry name" value="OMPdecase_AS"/>
</dbReference>
<dbReference type="InterPro" id="IPR047596">
    <property type="entry name" value="OMPdecase_bac"/>
</dbReference>
<dbReference type="InterPro" id="IPR001754">
    <property type="entry name" value="OMPdeCOase_dom"/>
</dbReference>
<dbReference type="InterPro" id="IPR011060">
    <property type="entry name" value="RibuloseP-bd_barrel"/>
</dbReference>
<dbReference type="NCBIfam" id="NF001273">
    <property type="entry name" value="PRK00230.1"/>
    <property type="match status" value="1"/>
</dbReference>
<dbReference type="NCBIfam" id="NF010386">
    <property type="entry name" value="PRK13813.1"/>
    <property type="match status" value="1"/>
</dbReference>
<dbReference type="NCBIfam" id="TIGR01740">
    <property type="entry name" value="pyrF"/>
    <property type="match status" value="1"/>
</dbReference>
<dbReference type="PANTHER" id="PTHR32119">
    <property type="entry name" value="OROTIDINE 5'-PHOSPHATE DECARBOXYLASE"/>
    <property type="match status" value="1"/>
</dbReference>
<dbReference type="PANTHER" id="PTHR32119:SF2">
    <property type="entry name" value="OROTIDINE 5'-PHOSPHATE DECARBOXYLASE"/>
    <property type="match status" value="1"/>
</dbReference>
<dbReference type="Pfam" id="PF00215">
    <property type="entry name" value="OMPdecase"/>
    <property type="match status" value="1"/>
</dbReference>
<dbReference type="SMART" id="SM00934">
    <property type="entry name" value="OMPdecase"/>
    <property type="match status" value="1"/>
</dbReference>
<dbReference type="SUPFAM" id="SSF51366">
    <property type="entry name" value="Ribulose-phoshate binding barrel"/>
    <property type="match status" value="1"/>
</dbReference>
<dbReference type="PROSITE" id="PS00156">
    <property type="entry name" value="OMPDECASE"/>
    <property type="match status" value="1"/>
</dbReference>
<keyword id="KW-0210">Decarboxylase</keyword>
<keyword id="KW-0456">Lyase</keyword>
<keyword id="KW-0665">Pyrimidine biosynthesis</keyword>
<reference key="1">
    <citation type="journal article" date="2007" name="Environ. Microbiol.">
        <title>Whole-genome analysis of the ammonia-oxidizing bacterium, Nitrosomonas eutropha C91: implications for niche adaptation.</title>
        <authorList>
            <person name="Stein L.Y."/>
            <person name="Arp D.J."/>
            <person name="Berube P.M."/>
            <person name="Chain P.S."/>
            <person name="Hauser L."/>
            <person name="Jetten M.S."/>
            <person name="Klotz M.G."/>
            <person name="Larimer F.W."/>
            <person name="Norton J.M."/>
            <person name="Op den Camp H.J.M."/>
            <person name="Shin M."/>
            <person name="Wei X."/>
        </authorList>
    </citation>
    <scope>NUCLEOTIDE SEQUENCE [LARGE SCALE GENOMIC DNA]</scope>
    <source>
        <strain>DSM 101675 / C91 / Nm57</strain>
    </source>
</reference>
<evidence type="ECO:0000255" key="1">
    <source>
        <dbReference type="HAMAP-Rule" id="MF_01200"/>
    </source>
</evidence>